<feature type="transit peptide" description="Mitochondrion" evidence="3">
    <location>
        <begin position="1"/>
        <end position="37"/>
    </location>
</feature>
<feature type="chain" id="PRO_0000305034" description="Small ribosomal subunit protein mS39">
    <location>
        <begin position="38"/>
        <end position="652"/>
    </location>
</feature>
<feature type="repeat" description="PPR 1" evidence="4">
    <location>
        <begin position="129"/>
        <end position="163"/>
    </location>
</feature>
<feature type="repeat" description="PPR 2" evidence="4">
    <location>
        <begin position="225"/>
        <end position="259"/>
    </location>
</feature>
<feature type="repeat" description="PPR 3" evidence="4">
    <location>
        <begin position="260"/>
        <end position="299"/>
    </location>
</feature>
<feature type="repeat" description="PPR 4" evidence="4">
    <location>
        <begin position="300"/>
        <end position="338"/>
    </location>
</feature>
<feature type="repeat" description="PPR 5" evidence="4">
    <location>
        <begin position="547"/>
        <end position="581"/>
    </location>
</feature>
<feature type="sequence conflict" description="In Ref. 3; AAM51998." evidence="7" ref="3">
    <original>K</original>
    <variation>R</variation>
    <location>
        <position position="98"/>
    </location>
</feature>
<feature type="sequence conflict" description="In Ref. 3; AAM51998." evidence="7" ref="3">
    <original>K</original>
    <variation>E</variation>
    <location>
        <position position="412"/>
    </location>
</feature>
<gene>
    <name evidence="6 9" type="primary">Ptcd3</name>
    <name evidence="9" type="ORF">CG4679</name>
</gene>
<dbReference type="EMBL" id="AE013599">
    <property type="protein sequence ID" value="AAF58398.1"/>
    <property type="molecule type" value="Genomic_DNA"/>
</dbReference>
<dbReference type="EMBL" id="AY121671">
    <property type="protein sequence ID" value="AAM51998.1"/>
    <property type="molecule type" value="mRNA"/>
</dbReference>
<dbReference type="EMBL" id="BT150278">
    <property type="protein sequence ID" value="AGV77180.1"/>
    <property type="molecule type" value="mRNA"/>
</dbReference>
<dbReference type="RefSeq" id="NP_610854.1">
    <property type="nucleotide sequence ID" value="NM_137010.3"/>
</dbReference>
<dbReference type="SMR" id="A1Z9A8"/>
<dbReference type="BioGRID" id="62229">
    <property type="interactions" value="3"/>
</dbReference>
<dbReference type="FunCoup" id="A1Z9A8">
    <property type="interactions" value="1908"/>
</dbReference>
<dbReference type="IntAct" id="A1Z9A8">
    <property type="interactions" value="20"/>
</dbReference>
<dbReference type="STRING" id="7227.FBpp0086872"/>
<dbReference type="PaxDb" id="7227-FBpp0086872"/>
<dbReference type="EnsemblMetazoa" id="FBtr0087759">
    <property type="protein sequence ID" value="FBpp0086872"/>
    <property type="gene ID" value="FBgn0033816"/>
</dbReference>
<dbReference type="GeneID" id="36466"/>
<dbReference type="KEGG" id="dme:Dmel_CG4679"/>
<dbReference type="UCSC" id="CG4679-RA">
    <property type="organism name" value="d. melanogaster"/>
</dbReference>
<dbReference type="AGR" id="FB:FBgn0033816"/>
<dbReference type="FlyBase" id="FBgn0033816">
    <property type="gene designation" value="Ptcd3"/>
</dbReference>
<dbReference type="VEuPathDB" id="VectorBase:FBgn0033816"/>
<dbReference type="eggNOG" id="KOG4422">
    <property type="taxonomic scope" value="Eukaryota"/>
</dbReference>
<dbReference type="GeneTree" id="ENSGT00390000016876"/>
<dbReference type="HOGENOM" id="CLU_026264_0_1_1"/>
<dbReference type="InParanoid" id="A1Z9A8"/>
<dbReference type="OMA" id="FMHQEAQ"/>
<dbReference type="OrthoDB" id="185373at2759"/>
<dbReference type="PhylomeDB" id="A1Z9A8"/>
<dbReference type="Reactome" id="R-DME-5389840">
    <property type="pathway name" value="Mitochondrial translation elongation"/>
</dbReference>
<dbReference type="Reactome" id="R-DME-5419276">
    <property type="pathway name" value="Mitochondrial translation termination"/>
</dbReference>
<dbReference type="BioGRID-ORCS" id="36466">
    <property type="hits" value="1 hit in 1 CRISPR screen"/>
</dbReference>
<dbReference type="GenomeRNAi" id="36466"/>
<dbReference type="PRO" id="PR:A1Z9A8"/>
<dbReference type="Proteomes" id="UP000000803">
    <property type="component" value="Chromosome 2R"/>
</dbReference>
<dbReference type="Bgee" id="FBgn0033816">
    <property type="expression patterns" value="Expressed in adult Malpighian tubule (Drosophila) and 72 other cell types or tissues"/>
</dbReference>
<dbReference type="ExpressionAtlas" id="A1Z9A8">
    <property type="expression patterns" value="baseline and differential"/>
</dbReference>
<dbReference type="GO" id="GO:0005739">
    <property type="term" value="C:mitochondrion"/>
    <property type="evidence" value="ECO:0007005"/>
    <property type="project" value="FlyBase"/>
</dbReference>
<dbReference type="GO" id="GO:1990904">
    <property type="term" value="C:ribonucleoprotein complex"/>
    <property type="evidence" value="ECO:0007669"/>
    <property type="project" value="UniProtKB-KW"/>
</dbReference>
<dbReference type="GO" id="GO:0005840">
    <property type="term" value="C:ribosome"/>
    <property type="evidence" value="ECO:0007669"/>
    <property type="project" value="UniProtKB-KW"/>
</dbReference>
<dbReference type="GO" id="GO:0043024">
    <property type="term" value="F:ribosomal small subunit binding"/>
    <property type="evidence" value="ECO:0000250"/>
    <property type="project" value="UniProtKB"/>
</dbReference>
<dbReference type="GO" id="GO:0019843">
    <property type="term" value="F:rRNA binding"/>
    <property type="evidence" value="ECO:0000250"/>
    <property type="project" value="UniProtKB"/>
</dbReference>
<dbReference type="GO" id="GO:0032543">
    <property type="term" value="P:mitochondrial translation"/>
    <property type="evidence" value="ECO:0000250"/>
    <property type="project" value="UniProtKB"/>
</dbReference>
<dbReference type="GO" id="GO:0006417">
    <property type="term" value="P:regulation of translation"/>
    <property type="evidence" value="ECO:0007669"/>
    <property type="project" value="UniProtKB-KW"/>
</dbReference>
<dbReference type="FunFam" id="1.25.40.10:FF:001004">
    <property type="entry name" value="Protein PTCD3 homolog, mitochondrial"/>
    <property type="match status" value="1"/>
</dbReference>
<dbReference type="Gene3D" id="1.25.40.10">
    <property type="entry name" value="Tetratricopeptide repeat domain"/>
    <property type="match status" value="1"/>
</dbReference>
<dbReference type="InterPro" id="IPR002885">
    <property type="entry name" value="Pentatricopeptide_rpt"/>
</dbReference>
<dbReference type="InterPro" id="IPR037387">
    <property type="entry name" value="PTCD3"/>
</dbReference>
<dbReference type="InterPro" id="IPR055063">
    <property type="entry name" value="Rib_mS39_PPR"/>
</dbReference>
<dbReference type="InterPro" id="IPR011990">
    <property type="entry name" value="TPR-like_helical_dom_sf"/>
</dbReference>
<dbReference type="PANTHER" id="PTHR16276">
    <property type="entry name" value="PENTATRICOPEPTIDE REPEAT DOMAIN-CONTAINING PROTEIN 3"/>
    <property type="match status" value="1"/>
</dbReference>
<dbReference type="PANTHER" id="PTHR16276:SF1">
    <property type="entry name" value="SMALL RIBOSOMAL SUBUNIT PROTEIN MS39"/>
    <property type="match status" value="1"/>
</dbReference>
<dbReference type="Pfam" id="PF13812">
    <property type="entry name" value="PPR_3"/>
    <property type="match status" value="1"/>
</dbReference>
<dbReference type="Pfam" id="PF22330">
    <property type="entry name" value="Rib_mS39_PPR"/>
    <property type="match status" value="1"/>
</dbReference>
<organism evidence="10">
    <name type="scientific">Drosophila melanogaster</name>
    <name type="common">Fruit fly</name>
    <dbReference type="NCBI Taxonomy" id="7227"/>
    <lineage>
        <taxon>Eukaryota</taxon>
        <taxon>Metazoa</taxon>
        <taxon>Ecdysozoa</taxon>
        <taxon>Arthropoda</taxon>
        <taxon>Hexapoda</taxon>
        <taxon>Insecta</taxon>
        <taxon>Pterygota</taxon>
        <taxon>Neoptera</taxon>
        <taxon>Endopterygota</taxon>
        <taxon>Diptera</taxon>
        <taxon>Brachycera</taxon>
        <taxon>Muscomorpha</taxon>
        <taxon>Ephydroidea</taxon>
        <taxon>Drosophilidae</taxon>
        <taxon>Drosophila</taxon>
        <taxon>Sophophora</taxon>
    </lineage>
</organism>
<comment type="function">
    <text evidence="1 2 5">Mitochondrial protein that may have a role in mitochondrial translation (By similarity) (PubMed:38074476). Essential for larval development (PubMed:38074476).</text>
</comment>
<comment type="subcellular location">
    <subcellularLocation>
        <location evidence="2">Mitochondrion</location>
    </subcellularLocation>
</comment>
<comment type="disruption phenotype">
    <text evidence="5">Larval lethal; arrested development at 1st or 2nd instar and failure to molt into 3rd instar.</text>
</comment>
<comment type="similarity">
    <text evidence="7">Belongs to the mitochondrion-specific ribosomal protein mS39 family.</text>
</comment>
<sequence>MYLSRQLRLLPRANIACSLSSSGAHYTTAAPAEDAPIEIPNRIERSPTDLLQALASTVARDYTAPHYKYHDDPFLIPMSNAAKRTYAMSKESGRKAAKWIKEEHRELFMHQEAQPAIEKFAPSMVYTEDSVVDETSLAQLISQGELKDAVLVYNLLEQKGNPISPELKQSLLELVCFHNNQEPIPEEYIEERWFLQNNKRRERSGKTWKDGDLAEKLYSEIEPKTPQSYASLIRGMAKYLQCERAYALLQEAGEKQVQLDTNTFNSVIEIVSFLKDTAEQRWQLCKDLLNEMSQQKLRPNLGTLNAVLQCISTFGNFKVARAAALQALPEFKQLGVNPSLGSYYYLLIIFCRERGPVSHVIVDILNDISGKEFQIQHPKDTYFFATAMDVCRNHLHDKSLAKKVDELLHTGKNYDLVGDSFKESIYYRNYLALLCQTESTEDFMLSYDLLVPNIYIPEPGIMEEILRAIEINGAVEYVPRLWSDMVVFDHTHRESLLLYVLRILVDNKPNPDSPAQAQLPEQGAKVALDMFERVEEAIKRLRKVSFTGQMLGDILTLLVRGGSYEKATEVFAHIDKNQHRIPGTPSLNALIEFVDASVQEKSPSQALFALQYAVENNFDSRELAKRIHEGFTLNETHLSKLKSLVGESFLDK</sequence>
<keyword id="KW-0496">Mitochondrion</keyword>
<keyword id="KW-1185">Reference proteome</keyword>
<keyword id="KW-0677">Repeat</keyword>
<keyword id="KW-0687">Ribonucleoprotein</keyword>
<keyword id="KW-0689">Ribosomal protein</keyword>
<keyword id="KW-0694">RNA-binding</keyword>
<keyword id="KW-0699">rRNA-binding</keyword>
<keyword id="KW-0809">Transit peptide</keyword>
<keyword id="KW-0810">Translation regulation</keyword>
<proteinExistence type="evidence at transcript level"/>
<name>PTCD3_DROME</name>
<evidence type="ECO:0000250" key="1"/>
<evidence type="ECO:0000250" key="2">
    <source>
        <dbReference type="UniProtKB" id="Q96EY7"/>
    </source>
</evidence>
<evidence type="ECO:0000255" key="3"/>
<evidence type="ECO:0000255" key="4">
    <source>
        <dbReference type="PROSITE-ProRule" id="PRU00708"/>
    </source>
</evidence>
<evidence type="ECO:0000269" key="5">
    <source>
    </source>
</evidence>
<evidence type="ECO:0000303" key="6">
    <source>
    </source>
</evidence>
<evidence type="ECO:0000305" key="7"/>
<evidence type="ECO:0000312" key="8">
    <source>
        <dbReference type="EMBL" id="AGV77180.1"/>
    </source>
</evidence>
<evidence type="ECO:0000312" key="9">
    <source>
        <dbReference type="FlyBase" id="FBgn0033816"/>
    </source>
</evidence>
<evidence type="ECO:0000312" key="10">
    <source>
        <dbReference type="Proteomes" id="UP000000803"/>
    </source>
</evidence>
<protein>
    <recommendedName>
        <fullName evidence="7">Small ribosomal subunit protein mS39</fullName>
    </recommendedName>
    <alternativeName>
        <fullName evidence="6 9">Pentatricopeptide repeat domain-containing protein 3 homolog, mitochondrial</fullName>
    </alternativeName>
</protein>
<accession>A1Z9A8</accession>
<accession>Q8MRC2</accession>
<accession>T2FGD8</accession>
<reference key="1">
    <citation type="journal article" date="2000" name="Science">
        <title>The genome sequence of Drosophila melanogaster.</title>
        <authorList>
            <person name="Adams M.D."/>
            <person name="Celniker S.E."/>
            <person name="Holt R.A."/>
            <person name="Evans C.A."/>
            <person name="Gocayne J.D."/>
            <person name="Amanatides P.G."/>
            <person name="Scherer S.E."/>
            <person name="Li P.W."/>
            <person name="Hoskins R.A."/>
            <person name="Galle R.F."/>
            <person name="George R.A."/>
            <person name="Lewis S.E."/>
            <person name="Richards S."/>
            <person name="Ashburner M."/>
            <person name="Henderson S.N."/>
            <person name="Sutton G.G."/>
            <person name="Wortman J.R."/>
            <person name="Yandell M.D."/>
            <person name="Zhang Q."/>
            <person name="Chen L.X."/>
            <person name="Brandon R.C."/>
            <person name="Rogers Y.-H.C."/>
            <person name="Blazej R.G."/>
            <person name="Champe M."/>
            <person name="Pfeiffer B.D."/>
            <person name="Wan K.H."/>
            <person name="Doyle C."/>
            <person name="Baxter E.G."/>
            <person name="Helt G."/>
            <person name="Nelson C.R."/>
            <person name="Miklos G.L.G."/>
            <person name="Abril J.F."/>
            <person name="Agbayani A."/>
            <person name="An H.-J."/>
            <person name="Andrews-Pfannkoch C."/>
            <person name="Baldwin D."/>
            <person name="Ballew R.M."/>
            <person name="Basu A."/>
            <person name="Baxendale J."/>
            <person name="Bayraktaroglu L."/>
            <person name="Beasley E.M."/>
            <person name="Beeson K.Y."/>
            <person name="Benos P.V."/>
            <person name="Berman B.P."/>
            <person name="Bhandari D."/>
            <person name="Bolshakov S."/>
            <person name="Borkova D."/>
            <person name="Botchan M.R."/>
            <person name="Bouck J."/>
            <person name="Brokstein P."/>
            <person name="Brottier P."/>
            <person name="Burtis K.C."/>
            <person name="Busam D.A."/>
            <person name="Butler H."/>
            <person name="Cadieu E."/>
            <person name="Center A."/>
            <person name="Chandra I."/>
            <person name="Cherry J.M."/>
            <person name="Cawley S."/>
            <person name="Dahlke C."/>
            <person name="Davenport L.B."/>
            <person name="Davies P."/>
            <person name="de Pablos B."/>
            <person name="Delcher A."/>
            <person name="Deng Z."/>
            <person name="Mays A.D."/>
            <person name="Dew I."/>
            <person name="Dietz S.M."/>
            <person name="Dodson K."/>
            <person name="Doup L.E."/>
            <person name="Downes M."/>
            <person name="Dugan-Rocha S."/>
            <person name="Dunkov B.C."/>
            <person name="Dunn P."/>
            <person name="Durbin K.J."/>
            <person name="Evangelista C.C."/>
            <person name="Ferraz C."/>
            <person name="Ferriera S."/>
            <person name="Fleischmann W."/>
            <person name="Fosler C."/>
            <person name="Gabrielian A.E."/>
            <person name="Garg N.S."/>
            <person name="Gelbart W.M."/>
            <person name="Glasser K."/>
            <person name="Glodek A."/>
            <person name="Gong F."/>
            <person name="Gorrell J.H."/>
            <person name="Gu Z."/>
            <person name="Guan P."/>
            <person name="Harris M."/>
            <person name="Harris N.L."/>
            <person name="Harvey D.A."/>
            <person name="Heiman T.J."/>
            <person name="Hernandez J.R."/>
            <person name="Houck J."/>
            <person name="Hostin D."/>
            <person name="Houston K.A."/>
            <person name="Howland T.J."/>
            <person name="Wei M.-H."/>
            <person name="Ibegwam C."/>
            <person name="Jalali M."/>
            <person name="Kalush F."/>
            <person name="Karpen G.H."/>
            <person name="Ke Z."/>
            <person name="Kennison J.A."/>
            <person name="Ketchum K.A."/>
            <person name="Kimmel B.E."/>
            <person name="Kodira C.D."/>
            <person name="Kraft C.L."/>
            <person name="Kravitz S."/>
            <person name="Kulp D."/>
            <person name="Lai Z."/>
            <person name="Lasko P."/>
            <person name="Lei Y."/>
            <person name="Levitsky A.A."/>
            <person name="Li J.H."/>
            <person name="Li Z."/>
            <person name="Liang Y."/>
            <person name="Lin X."/>
            <person name="Liu X."/>
            <person name="Mattei B."/>
            <person name="McIntosh T.C."/>
            <person name="McLeod M.P."/>
            <person name="McPherson D."/>
            <person name="Merkulov G."/>
            <person name="Milshina N.V."/>
            <person name="Mobarry C."/>
            <person name="Morris J."/>
            <person name="Moshrefi A."/>
            <person name="Mount S.M."/>
            <person name="Moy M."/>
            <person name="Murphy B."/>
            <person name="Murphy L."/>
            <person name="Muzny D.M."/>
            <person name="Nelson D.L."/>
            <person name="Nelson D.R."/>
            <person name="Nelson K.A."/>
            <person name="Nixon K."/>
            <person name="Nusskern D.R."/>
            <person name="Pacleb J.M."/>
            <person name="Palazzolo M."/>
            <person name="Pittman G.S."/>
            <person name="Pan S."/>
            <person name="Pollard J."/>
            <person name="Puri V."/>
            <person name="Reese M.G."/>
            <person name="Reinert K."/>
            <person name="Remington K."/>
            <person name="Saunders R.D.C."/>
            <person name="Scheeler F."/>
            <person name="Shen H."/>
            <person name="Shue B.C."/>
            <person name="Siden-Kiamos I."/>
            <person name="Simpson M."/>
            <person name="Skupski M.P."/>
            <person name="Smith T.J."/>
            <person name="Spier E."/>
            <person name="Spradling A.C."/>
            <person name="Stapleton M."/>
            <person name="Strong R."/>
            <person name="Sun E."/>
            <person name="Svirskas R."/>
            <person name="Tector C."/>
            <person name="Turner R."/>
            <person name="Venter E."/>
            <person name="Wang A.H."/>
            <person name="Wang X."/>
            <person name="Wang Z.-Y."/>
            <person name="Wassarman D.A."/>
            <person name="Weinstock G.M."/>
            <person name="Weissenbach J."/>
            <person name="Williams S.M."/>
            <person name="Woodage T."/>
            <person name="Worley K.C."/>
            <person name="Wu D."/>
            <person name="Yang S."/>
            <person name="Yao Q.A."/>
            <person name="Ye J."/>
            <person name="Yeh R.-F."/>
            <person name="Zaveri J.S."/>
            <person name="Zhan M."/>
            <person name="Zhang G."/>
            <person name="Zhao Q."/>
            <person name="Zheng L."/>
            <person name="Zheng X.H."/>
            <person name="Zhong F.N."/>
            <person name="Zhong W."/>
            <person name="Zhou X."/>
            <person name="Zhu S.C."/>
            <person name="Zhu X."/>
            <person name="Smith H.O."/>
            <person name="Gibbs R.A."/>
            <person name="Myers E.W."/>
            <person name="Rubin G.M."/>
            <person name="Venter J.C."/>
        </authorList>
    </citation>
    <scope>NUCLEOTIDE SEQUENCE [LARGE SCALE GENOMIC DNA]</scope>
    <source>
        <strain>Berkeley</strain>
    </source>
</reference>
<reference key="2">
    <citation type="journal article" date="2002" name="Genome Biol.">
        <title>Annotation of the Drosophila melanogaster euchromatic genome: a systematic review.</title>
        <authorList>
            <person name="Misra S."/>
            <person name="Crosby M.A."/>
            <person name="Mungall C.J."/>
            <person name="Matthews B.B."/>
            <person name="Campbell K.S."/>
            <person name="Hradecky P."/>
            <person name="Huang Y."/>
            <person name="Kaminker J.S."/>
            <person name="Millburn G.H."/>
            <person name="Prochnik S.E."/>
            <person name="Smith C.D."/>
            <person name="Tupy J.L."/>
            <person name="Whitfield E.J."/>
            <person name="Bayraktaroglu L."/>
            <person name="Berman B.P."/>
            <person name="Bettencourt B.R."/>
            <person name="Celniker S.E."/>
            <person name="de Grey A.D.N.J."/>
            <person name="Drysdale R.A."/>
            <person name="Harris N.L."/>
            <person name="Richter J."/>
            <person name="Russo S."/>
            <person name="Schroeder A.J."/>
            <person name="Shu S.Q."/>
            <person name="Stapleton M."/>
            <person name="Yamada C."/>
            <person name="Ashburner M."/>
            <person name="Gelbart W.M."/>
            <person name="Rubin G.M."/>
            <person name="Lewis S.E."/>
        </authorList>
    </citation>
    <scope>GENOME REANNOTATION</scope>
    <source>
        <strain>Berkeley</strain>
    </source>
</reference>
<reference key="3">
    <citation type="journal article" date="2002" name="Genome Biol.">
        <title>A Drosophila full-length cDNA resource.</title>
        <authorList>
            <person name="Stapleton M."/>
            <person name="Carlson J.W."/>
            <person name="Brokstein P."/>
            <person name="Yu C."/>
            <person name="Champe M."/>
            <person name="George R.A."/>
            <person name="Guarin H."/>
            <person name="Kronmiller B."/>
            <person name="Pacleb J.M."/>
            <person name="Park S."/>
            <person name="Wan K.H."/>
            <person name="Rubin G.M."/>
            <person name="Celniker S.E."/>
        </authorList>
    </citation>
    <scope>NUCLEOTIDE SEQUENCE [LARGE SCALE MRNA]</scope>
    <source>
        <strain>Berkeley</strain>
        <tissue>Embryo</tissue>
    </source>
</reference>
<reference evidence="8" key="4">
    <citation type="submission" date="2013-09" db="EMBL/GenBank/DDBJ databases">
        <authorList>
            <person name="Carlson J."/>
            <person name="Booth B."/>
            <person name="Frise E."/>
            <person name="Park S."/>
            <person name="Wan K."/>
            <person name="Yu C."/>
            <person name="Celniker S."/>
        </authorList>
    </citation>
    <scope>NUCLEOTIDE SEQUENCE [LARGE SCALE MRNA]</scope>
</reference>
<reference key="5">
    <citation type="journal article" date="2023" name="MicroPubl. Biol.">
        <title>A Drosophila melanogaster ortholog of pentatricopeptide repeat domain 3 (PTCD3) is essential for development.</title>
        <authorList>
            <person name="Imura E."/>
            <person name="Enya S."/>
            <person name="Niwa R."/>
        </authorList>
    </citation>
    <scope>FUNCTION</scope>
    <scope>DISRUPTION PHENOTYPE</scope>
</reference>